<evidence type="ECO:0000255" key="1">
    <source>
        <dbReference type="HAMAP-Rule" id="MF_01865"/>
    </source>
</evidence>
<evidence type="ECO:0000255" key="2">
    <source>
        <dbReference type="PROSITE-ProRule" id="PRU01266"/>
    </source>
</evidence>
<gene>
    <name evidence="1" type="primary">rimO</name>
    <name type="ordered locus">BCAN_B0566</name>
</gene>
<dbReference type="EC" id="2.8.4.4" evidence="1"/>
<dbReference type="EMBL" id="CP000873">
    <property type="protein sequence ID" value="ABX63743.1"/>
    <property type="molecule type" value="Genomic_DNA"/>
</dbReference>
<dbReference type="RefSeq" id="WP_002966068.1">
    <property type="nucleotide sequence ID" value="NC_010104.1"/>
</dbReference>
<dbReference type="SMR" id="A9MBK6"/>
<dbReference type="GeneID" id="93015440"/>
<dbReference type="KEGG" id="bcs:BCAN_B0566"/>
<dbReference type="HOGENOM" id="CLU_018697_0_0_5"/>
<dbReference type="PhylomeDB" id="A9MBK6"/>
<dbReference type="Proteomes" id="UP000001385">
    <property type="component" value="Chromosome II"/>
</dbReference>
<dbReference type="GO" id="GO:0005829">
    <property type="term" value="C:cytosol"/>
    <property type="evidence" value="ECO:0007669"/>
    <property type="project" value="TreeGrafter"/>
</dbReference>
<dbReference type="GO" id="GO:0051539">
    <property type="term" value="F:4 iron, 4 sulfur cluster binding"/>
    <property type="evidence" value="ECO:0007669"/>
    <property type="project" value="UniProtKB-UniRule"/>
</dbReference>
<dbReference type="GO" id="GO:0035599">
    <property type="term" value="F:aspartic acid methylthiotransferase activity"/>
    <property type="evidence" value="ECO:0007669"/>
    <property type="project" value="TreeGrafter"/>
</dbReference>
<dbReference type="GO" id="GO:0046872">
    <property type="term" value="F:metal ion binding"/>
    <property type="evidence" value="ECO:0007669"/>
    <property type="project" value="UniProtKB-KW"/>
</dbReference>
<dbReference type="GO" id="GO:0103039">
    <property type="term" value="F:protein methylthiotransferase activity"/>
    <property type="evidence" value="ECO:0007669"/>
    <property type="project" value="UniProtKB-EC"/>
</dbReference>
<dbReference type="GO" id="GO:0006400">
    <property type="term" value="P:tRNA modification"/>
    <property type="evidence" value="ECO:0007669"/>
    <property type="project" value="InterPro"/>
</dbReference>
<dbReference type="CDD" id="cd01335">
    <property type="entry name" value="Radical_SAM"/>
    <property type="match status" value="1"/>
</dbReference>
<dbReference type="FunFam" id="3.40.50.12160:FF:000002">
    <property type="entry name" value="Ribosomal protein S12 methylthiotransferase RimO"/>
    <property type="match status" value="1"/>
</dbReference>
<dbReference type="FunFam" id="3.80.30.20:FF:000001">
    <property type="entry name" value="tRNA-2-methylthio-N(6)-dimethylallyladenosine synthase 2"/>
    <property type="match status" value="1"/>
</dbReference>
<dbReference type="Gene3D" id="3.40.50.12160">
    <property type="entry name" value="Methylthiotransferase, N-terminal domain"/>
    <property type="match status" value="1"/>
</dbReference>
<dbReference type="Gene3D" id="2.40.50.140">
    <property type="entry name" value="Nucleic acid-binding proteins"/>
    <property type="match status" value="1"/>
</dbReference>
<dbReference type="Gene3D" id="3.80.30.20">
    <property type="entry name" value="tm_1862 like domain"/>
    <property type="match status" value="1"/>
</dbReference>
<dbReference type="HAMAP" id="MF_01865">
    <property type="entry name" value="MTTase_RimO"/>
    <property type="match status" value="1"/>
</dbReference>
<dbReference type="InterPro" id="IPR006638">
    <property type="entry name" value="Elp3/MiaA/NifB-like_rSAM"/>
</dbReference>
<dbReference type="InterPro" id="IPR005839">
    <property type="entry name" value="Methylthiotransferase"/>
</dbReference>
<dbReference type="InterPro" id="IPR020612">
    <property type="entry name" value="Methylthiotransferase_CS"/>
</dbReference>
<dbReference type="InterPro" id="IPR013848">
    <property type="entry name" value="Methylthiotransferase_N"/>
</dbReference>
<dbReference type="InterPro" id="IPR038135">
    <property type="entry name" value="Methylthiotransferase_N_sf"/>
</dbReference>
<dbReference type="InterPro" id="IPR012340">
    <property type="entry name" value="NA-bd_OB-fold"/>
</dbReference>
<dbReference type="InterPro" id="IPR005840">
    <property type="entry name" value="Ribosomal_uS12_MeSTrfase_RimO"/>
</dbReference>
<dbReference type="InterPro" id="IPR007197">
    <property type="entry name" value="rSAM"/>
</dbReference>
<dbReference type="InterPro" id="IPR023404">
    <property type="entry name" value="rSAM_horseshoe"/>
</dbReference>
<dbReference type="InterPro" id="IPR002792">
    <property type="entry name" value="TRAM_dom"/>
</dbReference>
<dbReference type="NCBIfam" id="TIGR01125">
    <property type="entry name" value="30S ribosomal protein S12 methylthiotransferase RimO"/>
    <property type="match status" value="1"/>
</dbReference>
<dbReference type="NCBIfam" id="TIGR00089">
    <property type="entry name" value="MiaB/RimO family radical SAM methylthiotransferase"/>
    <property type="match status" value="1"/>
</dbReference>
<dbReference type="PANTHER" id="PTHR43837">
    <property type="entry name" value="RIBOSOMAL PROTEIN S12 METHYLTHIOTRANSFERASE RIMO"/>
    <property type="match status" value="1"/>
</dbReference>
<dbReference type="PANTHER" id="PTHR43837:SF1">
    <property type="entry name" value="RIBOSOMAL PROTEIN US12 METHYLTHIOTRANSFERASE RIMO"/>
    <property type="match status" value="1"/>
</dbReference>
<dbReference type="Pfam" id="PF04055">
    <property type="entry name" value="Radical_SAM"/>
    <property type="match status" value="1"/>
</dbReference>
<dbReference type="Pfam" id="PF18693">
    <property type="entry name" value="TRAM_2"/>
    <property type="match status" value="1"/>
</dbReference>
<dbReference type="Pfam" id="PF00919">
    <property type="entry name" value="UPF0004"/>
    <property type="match status" value="1"/>
</dbReference>
<dbReference type="SFLD" id="SFLDG01082">
    <property type="entry name" value="B12-binding_domain_containing"/>
    <property type="match status" value="1"/>
</dbReference>
<dbReference type="SFLD" id="SFLDG01061">
    <property type="entry name" value="methylthiotransferase"/>
    <property type="match status" value="1"/>
</dbReference>
<dbReference type="SFLD" id="SFLDF00274">
    <property type="entry name" value="ribosomal_protein_S12_methylth"/>
    <property type="match status" value="1"/>
</dbReference>
<dbReference type="SMART" id="SM00729">
    <property type="entry name" value="Elp3"/>
    <property type="match status" value="1"/>
</dbReference>
<dbReference type="SUPFAM" id="SSF102114">
    <property type="entry name" value="Radical SAM enzymes"/>
    <property type="match status" value="1"/>
</dbReference>
<dbReference type="PROSITE" id="PS51449">
    <property type="entry name" value="MTTASE_N"/>
    <property type="match status" value="1"/>
</dbReference>
<dbReference type="PROSITE" id="PS01278">
    <property type="entry name" value="MTTASE_RADICAL"/>
    <property type="match status" value="1"/>
</dbReference>
<dbReference type="PROSITE" id="PS51918">
    <property type="entry name" value="RADICAL_SAM"/>
    <property type="match status" value="1"/>
</dbReference>
<dbReference type="PROSITE" id="PS50926">
    <property type="entry name" value="TRAM"/>
    <property type="match status" value="1"/>
</dbReference>
<feature type="chain" id="PRO_0000374723" description="Ribosomal protein uS12 methylthiotransferase RimO">
    <location>
        <begin position="1"/>
        <end position="437"/>
    </location>
</feature>
<feature type="domain" description="MTTase N-terminal" evidence="1">
    <location>
        <begin position="4"/>
        <end position="114"/>
    </location>
</feature>
<feature type="domain" description="Radical SAM core" evidence="2">
    <location>
        <begin position="131"/>
        <end position="369"/>
    </location>
</feature>
<feature type="domain" description="TRAM" evidence="1">
    <location>
        <begin position="372"/>
        <end position="437"/>
    </location>
</feature>
<feature type="binding site" evidence="1">
    <location>
        <position position="13"/>
    </location>
    <ligand>
        <name>[4Fe-4S] cluster</name>
        <dbReference type="ChEBI" id="CHEBI:49883"/>
        <label>1</label>
    </ligand>
</feature>
<feature type="binding site" evidence="1">
    <location>
        <position position="49"/>
    </location>
    <ligand>
        <name>[4Fe-4S] cluster</name>
        <dbReference type="ChEBI" id="CHEBI:49883"/>
        <label>1</label>
    </ligand>
</feature>
<feature type="binding site" evidence="1">
    <location>
        <position position="78"/>
    </location>
    <ligand>
        <name>[4Fe-4S] cluster</name>
        <dbReference type="ChEBI" id="CHEBI:49883"/>
        <label>1</label>
    </ligand>
</feature>
<feature type="binding site" evidence="1">
    <location>
        <position position="145"/>
    </location>
    <ligand>
        <name>[4Fe-4S] cluster</name>
        <dbReference type="ChEBI" id="CHEBI:49883"/>
        <label>2</label>
        <note>4Fe-4S-S-AdoMet</note>
    </ligand>
</feature>
<feature type="binding site" evidence="1">
    <location>
        <position position="149"/>
    </location>
    <ligand>
        <name>[4Fe-4S] cluster</name>
        <dbReference type="ChEBI" id="CHEBI:49883"/>
        <label>2</label>
        <note>4Fe-4S-S-AdoMet</note>
    </ligand>
</feature>
<feature type="binding site" evidence="1">
    <location>
        <position position="152"/>
    </location>
    <ligand>
        <name>[4Fe-4S] cluster</name>
        <dbReference type="ChEBI" id="CHEBI:49883"/>
        <label>2</label>
        <note>4Fe-4S-S-AdoMet</note>
    </ligand>
</feature>
<protein>
    <recommendedName>
        <fullName evidence="1">Ribosomal protein uS12 methylthiotransferase RimO</fullName>
        <shortName evidence="1">uS12 MTTase</shortName>
        <shortName evidence="1">uS12 methylthiotransferase</shortName>
        <ecNumber evidence="1">2.8.4.4</ecNumber>
    </recommendedName>
    <alternativeName>
        <fullName evidence="1">Ribosomal protein uS12 (aspartate-C(3))-methylthiotransferase</fullName>
    </alternativeName>
    <alternativeName>
        <fullName evidence="1">Ribosome maturation factor RimO</fullName>
    </alternativeName>
</protein>
<proteinExistence type="inferred from homology"/>
<reference key="1">
    <citation type="submission" date="2007-10" db="EMBL/GenBank/DDBJ databases">
        <title>Brucella canis ATCC 23365 whole genome shotgun sequencing project.</title>
        <authorList>
            <person name="Setubal J.C."/>
            <person name="Bowns C."/>
            <person name="Boyle S."/>
            <person name="Crasta O.R."/>
            <person name="Czar M.J."/>
            <person name="Dharmanolla C."/>
            <person name="Gillespie J.J."/>
            <person name="Kenyon R.W."/>
            <person name="Lu J."/>
            <person name="Mane S."/>
            <person name="Mohapatra S."/>
            <person name="Nagrani S."/>
            <person name="Purkayastha A."/>
            <person name="Rajasimha H.K."/>
            <person name="Shallom J.M."/>
            <person name="Shallom S."/>
            <person name="Shukla M."/>
            <person name="Snyder E.E."/>
            <person name="Sobral B.W."/>
            <person name="Wattam A.R."/>
            <person name="Will R."/>
            <person name="Williams K."/>
            <person name="Yoo H."/>
            <person name="Bruce D."/>
            <person name="Detter C."/>
            <person name="Munk C."/>
            <person name="Brettin T.S."/>
        </authorList>
    </citation>
    <scope>NUCLEOTIDE SEQUENCE [LARGE SCALE GENOMIC DNA]</scope>
    <source>
        <strain>ATCC 23365 / NCTC 10854 / RM-666</strain>
    </source>
</reference>
<sequence length="437" mass="48774">MSAPRVSFVSLGCPKALVDSERIITGLRSEGYEISRKHDGADLVIVNTCGFLDSARDESLEAIGLALNENGKVIVTGCLGAEPDVIRERHPNVLAITGPQAYESVMNAVHEVAPPAHDPFVDLVPPQGVKLTPRHYAYLKISEGCSNRCSFCIIPALRGDLVSRPINEVLREAEKLVQAGVKEILVISQDTSAYGLDIKYQEAMWQDRTVRTKFLDLSRELGEMGVWVRMHYVYPYPHVDEVIPLMAEGKILPYLDIPFQHASPAVLKNMRRPAHQEKTSRRIQAWRETCPDLAVRSTFIVGYPGETEEDFQMLLDWLDEAKIERAGCFKYEAVKGAKANDLGLEQVPEEVKEARWHRFMAKQQQISTNLLKKKVGKRLPVIIDEANGTIGKGRTRYDAPEIDGSVHISSRRPLRVGDIVTVKIEASDAYDLHGTAV</sequence>
<name>RIMO_BRUC2</name>
<organism>
    <name type="scientific">Brucella canis (strain ATCC 23365 / NCTC 10854 / RM-666)</name>
    <dbReference type="NCBI Taxonomy" id="483179"/>
    <lineage>
        <taxon>Bacteria</taxon>
        <taxon>Pseudomonadati</taxon>
        <taxon>Pseudomonadota</taxon>
        <taxon>Alphaproteobacteria</taxon>
        <taxon>Hyphomicrobiales</taxon>
        <taxon>Brucellaceae</taxon>
        <taxon>Brucella/Ochrobactrum group</taxon>
        <taxon>Brucella</taxon>
    </lineage>
</organism>
<accession>A9MBK6</accession>
<comment type="function">
    <text evidence="1">Catalyzes the methylthiolation of an aspartic acid residue of ribosomal protein uS12.</text>
</comment>
<comment type="catalytic activity">
    <reaction evidence="1">
        <text>L-aspartate(89)-[ribosomal protein uS12]-hydrogen + (sulfur carrier)-SH + AH2 + 2 S-adenosyl-L-methionine = 3-methylsulfanyl-L-aspartate(89)-[ribosomal protein uS12]-hydrogen + (sulfur carrier)-H + 5'-deoxyadenosine + L-methionine + A + S-adenosyl-L-homocysteine + 2 H(+)</text>
        <dbReference type="Rhea" id="RHEA:37087"/>
        <dbReference type="Rhea" id="RHEA-COMP:10460"/>
        <dbReference type="Rhea" id="RHEA-COMP:10461"/>
        <dbReference type="Rhea" id="RHEA-COMP:14737"/>
        <dbReference type="Rhea" id="RHEA-COMP:14739"/>
        <dbReference type="ChEBI" id="CHEBI:13193"/>
        <dbReference type="ChEBI" id="CHEBI:15378"/>
        <dbReference type="ChEBI" id="CHEBI:17319"/>
        <dbReference type="ChEBI" id="CHEBI:17499"/>
        <dbReference type="ChEBI" id="CHEBI:29917"/>
        <dbReference type="ChEBI" id="CHEBI:29961"/>
        <dbReference type="ChEBI" id="CHEBI:57844"/>
        <dbReference type="ChEBI" id="CHEBI:57856"/>
        <dbReference type="ChEBI" id="CHEBI:59789"/>
        <dbReference type="ChEBI" id="CHEBI:64428"/>
        <dbReference type="ChEBI" id="CHEBI:73599"/>
        <dbReference type="EC" id="2.8.4.4"/>
    </reaction>
</comment>
<comment type="cofactor">
    <cofactor evidence="1">
        <name>[4Fe-4S] cluster</name>
        <dbReference type="ChEBI" id="CHEBI:49883"/>
    </cofactor>
    <text evidence="1">Binds 2 [4Fe-4S] clusters. One cluster is coordinated with 3 cysteines and an exchangeable S-adenosyl-L-methionine.</text>
</comment>
<comment type="subcellular location">
    <subcellularLocation>
        <location evidence="1">Cytoplasm</location>
    </subcellularLocation>
</comment>
<comment type="similarity">
    <text evidence="1">Belongs to the methylthiotransferase family. RimO subfamily.</text>
</comment>
<keyword id="KW-0004">4Fe-4S</keyword>
<keyword id="KW-0963">Cytoplasm</keyword>
<keyword id="KW-0408">Iron</keyword>
<keyword id="KW-0411">Iron-sulfur</keyword>
<keyword id="KW-0479">Metal-binding</keyword>
<keyword id="KW-1185">Reference proteome</keyword>
<keyword id="KW-0949">S-adenosyl-L-methionine</keyword>
<keyword id="KW-0808">Transferase</keyword>